<protein>
    <recommendedName>
        <fullName evidence="1">Putative pterin-4-alpha-carbinolamine dehydratase</fullName>
        <shortName evidence="1">PHS</shortName>
        <ecNumber evidence="1">4.2.1.96</ecNumber>
    </recommendedName>
    <alternativeName>
        <fullName evidence="1">4-alpha-hydroxy-tetrahydropterin dehydratase</fullName>
    </alternativeName>
    <alternativeName>
        <fullName evidence="1">Pterin carbinolamine dehydratase</fullName>
        <shortName evidence="1">PCD</shortName>
    </alternativeName>
</protein>
<evidence type="ECO:0000255" key="1">
    <source>
        <dbReference type="HAMAP-Rule" id="MF_00434"/>
    </source>
</evidence>
<evidence type="ECO:0007829" key="2">
    <source>
        <dbReference type="PDB" id="3JST"/>
    </source>
</evidence>
<keyword id="KW-0002">3D-structure</keyword>
<keyword id="KW-0456">Lyase</keyword>
<sequence>MARNRLTESEMNEALRALDGWQKVDGREAITRSFKFKDFSTAFGFMAQAALYAEKLDHHPEWFNAYNRVDVTLATHSENGVTELDIKMARKMNAIAG</sequence>
<organism>
    <name type="scientific">Brucella melitensis biotype 1 (strain ATCC 23456 / CCUG 17765 / NCTC 10094 / 16M)</name>
    <dbReference type="NCBI Taxonomy" id="224914"/>
    <lineage>
        <taxon>Bacteria</taxon>
        <taxon>Pseudomonadati</taxon>
        <taxon>Pseudomonadota</taxon>
        <taxon>Alphaproteobacteria</taxon>
        <taxon>Hyphomicrobiales</taxon>
        <taxon>Brucellaceae</taxon>
        <taxon>Brucella/Ochrobactrum group</taxon>
        <taxon>Brucella</taxon>
    </lineage>
</organism>
<feature type="chain" id="PRO_0000063076" description="Putative pterin-4-alpha-carbinolamine dehydratase">
    <location>
        <begin position="1"/>
        <end position="97"/>
    </location>
</feature>
<feature type="helix" evidence="2">
    <location>
        <begin position="8"/>
        <end position="16"/>
    </location>
</feature>
<feature type="strand" evidence="2">
    <location>
        <begin position="30"/>
        <end position="35"/>
    </location>
</feature>
<feature type="helix" evidence="2">
    <location>
        <begin position="39"/>
        <end position="56"/>
    </location>
</feature>
<feature type="strand" evidence="2">
    <location>
        <begin position="61"/>
        <end position="65"/>
    </location>
</feature>
<feature type="strand" evidence="2">
    <location>
        <begin position="68"/>
        <end position="73"/>
    </location>
</feature>
<feature type="turn" evidence="2">
    <location>
        <begin position="76"/>
        <end position="79"/>
    </location>
</feature>
<feature type="helix" evidence="2">
    <location>
        <begin position="83"/>
        <end position="96"/>
    </location>
</feature>
<dbReference type="EC" id="4.2.1.96" evidence="1"/>
<dbReference type="EMBL" id="AE008917">
    <property type="protein sequence ID" value="AAL53045.1"/>
    <property type="molecule type" value="Genomic_DNA"/>
</dbReference>
<dbReference type="PIR" id="AB3485">
    <property type="entry name" value="AB3485"/>
</dbReference>
<dbReference type="RefSeq" id="WP_002965330.1">
    <property type="nucleotide sequence ID" value="NZ_GG703778.1"/>
</dbReference>
<dbReference type="PDB" id="3JST">
    <property type="method" value="X-ray"/>
    <property type="resolution" value="2.10 A"/>
    <property type="chains" value="A/B=1-97"/>
</dbReference>
<dbReference type="PDBsum" id="3JST"/>
<dbReference type="SMR" id="P65722"/>
<dbReference type="KEGG" id="bme:BMEI1864"/>
<dbReference type="KEGG" id="bmel:DK63_1625"/>
<dbReference type="PATRIC" id="fig|224914.52.peg.1713"/>
<dbReference type="eggNOG" id="COG2154">
    <property type="taxonomic scope" value="Bacteria"/>
</dbReference>
<dbReference type="EvolutionaryTrace" id="P65722"/>
<dbReference type="Proteomes" id="UP000000419">
    <property type="component" value="Chromosome I"/>
</dbReference>
<dbReference type="GO" id="GO:0008124">
    <property type="term" value="F:4-alpha-hydroxytetrahydrobiopterin dehydratase activity"/>
    <property type="evidence" value="ECO:0007669"/>
    <property type="project" value="UniProtKB-UniRule"/>
</dbReference>
<dbReference type="GO" id="GO:0006729">
    <property type="term" value="P:tetrahydrobiopterin biosynthetic process"/>
    <property type="evidence" value="ECO:0007669"/>
    <property type="project" value="InterPro"/>
</dbReference>
<dbReference type="CDD" id="cd00914">
    <property type="entry name" value="PCD_DCoH_subfamily_b"/>
    <property type="match status" value="1"/>
</dbReference>
<dbReference type="Gene3D" id="3.30.1360.20">
    <property type="entry name" value="Transcriptional coactivator/pterin dehydratase"/>
    <property type="match status" value="1"/>
</dbReference>
<dbReference type="HAMAP" id="MF_00434">
    <property type="entry name" value="Pterin_4_alpha"/>
    <property type="match status" value="1"/>
</dbReference>
<dbReference type="InterPro" id="IPR036428">
    <property type="entry name" value="PCD_sf"/>
</dbReference>
<dbReference type="InterPro" id="IPR001533">
    <property type="entry name" value="Pterin_deHydtase"/>
</dbReference>
<dbReference type="NCBIfam" id="NF002017">
    <property type="entry name" value="PRK00823.1-2"/>
    <property type="match status" value="1"/>
</dbReference>
<dbReference type="NCBIfam" id="NF002018">
    <property type="entry name" value="PRK00823.1-3"/>
    <property type="match status" value="1"/>
</dbReference>
<dbReference type="PANTHER" id="PTHR12599">
    <property type="entry name" value="PTERIN-4-ALPHA-CARBINOLAMINE DEHYDRATASE"/>
    <property type="match status" value="1"/>
</dbReference>
<dbReference type="PANTHER" id="PTHR12599:SF0">
    <property type="entry name" value="PTERIN-4-ALPHA-CARBINOLAMINE DEHYDRATASE"/>
    <property type="match status" value="1"/>
</dbReference>
<dbReference type="Pfam" id="PF01329">
    <property type="entry name" value="Pterin_4a"/>
    <property type="match status" value="1"/>
</dbReference>
<dbReference type="SUPFAM" id="SSF55248">
    <property type="entry name" value="PCD-like"/>
    <property type="match status" value="1"/>
</dbReference>
<proteinExistence type="evidence at protein level"/>
<comment type="catalytic activity">
    <reaction evidence="1">
        <text>(4aS,6R)-4a-hydroxy-L-erythro-5,6,7,8-tetrahydrobiopterin = (6R)-L-erythro-6,7-dihydrobiopterin + H2O</text>
        <dbReference type="Rhea" id="RHEA:11920"/>
        <dbReference type="ChEBI" id="CHEBI:15377"/>
        <dbReference type="ChEBI" id="CHEBI:15642"/>
        <dbReference type="ChEBI" id="CHEBI:43120"/>
        <dbReference type="EC" id="4.2.1.96"/>
    </reaction>
</comment>
<comment type="similarity">
    <text evidence="1">Belongs to the pterin-4-alpha-carbinolamine dehydratase family.</text>
</comment>
<name>PHS_BRUME</name>
<accession>P65722</accession>
<accession>Q8YEL4</accession>
<reference key="1">
    <citation type="journal article" date="2002" name="Proc. Natl. Acad. Sci. U.S.A.">
        <title>The genome sequence of the facultative intracellular pathogen Brucella melitensis.</title>
        <authorList>
            <person name="DelVecchio V.G."/>
            <person name="Kapatral V."/>
            <person name="Redkar R.J."/>
            <person name="Patra G."/>
            <person name="Mujer C."/>
            <person name="Los T."/>
            <person name="Ivanova N."/>
            <person name="Anderson I."/>
            <person name="Bhattacharyya A."/>
            <person name="Lykidis A."/>
            <person name="Reznik G."/>
            <person name="Jablonski L."/>
            <person name="Larsen N."/>
            <person name="D'Souza M."/>
            <person name="Bernal A."/>
            <person name="Mazur M."/>
            <person name="Goltsman E."/>
            <person name="Selkov E."/>
            <person name="Elzer P.H."/>
            <person name="Hagius S."/>
            <person name="O'Callaghan D."/>
            <person name="Letesson J.-J."/>
            <person name="Haselkorn R."/>
            <person name="Kyrpides N.C."/>
            <person name="Overbeek R."/>
        </authorList>
    </citation>
    <scope>NUCLEOTIDE SEQUENCE [LARGE SCALE GENOMIC DNA]</scope>
    <source>
        <strain>ATCC 23456 / CCUG 17765 / NCTC 10094 / 16M</strain>
    </source>
</reference>
<gene>
    <name type="primary">phhB</name>
    <name type="ordered locus">BMEI1864</name>
</gene>